<sequence length="238" mass="25723">MSQPIYKRILLKLSGEALQGDEGFGIDPSILDRMALEIKGLLGLGVEVGVVLGGGNLFRGAKLAKAGMNRVVGDHMGMLATVMNGLAMRDALHRANVNAKLMSAFQLNGICDTYNWSEAIKMLCEKRVVIFSAGTGSPFFTTDSAACLRGIEIEADVVLKATKVDGVYDCDPVKNPNAVLYHKLSYAEVIEKELQVMDLAAFTLARDHNMPIRVFNMSKTGALRNVILGKTEGTLICD</sequence>
<accession>Q0I378</accession>
<reference key="1">
    <citation type="journal article" date="2007" name="J. Bacteriol.">
        <title>Complete genome sequence of Haemophilus somnus (Histophilus somni) strain 129Pt and comparison to Haemophilus ducreyi 35000HP and Haemophilus influenzae Rd.</title>
        <authorList>
            <person name="Challacombe J.F."/>
            <person name="Duncan A.J."/>
            <person name="Brettin T.S."/>
            <person name="Bruce D."/>
            <person name="Chertkov O."/>
            <person name="Detter J.C."/>
            <person name="Han C.S."/>
            <person name="Misra M."/>
            <person name="Richardson P."/>
            <person name="Tapia R."/>
            <person name="Thayer N."/>
            <person name="Xie G."/>
            <person name="Inzana T.J."/>
        </authorList>
    </citation>
    <scope>NUCLEOTIDE SEQUENCE [LARGE SCALE GENOMIC DNA]</scope>
    <source>
        <strain>129Pt</strain>
    </source>
</reference>
<feature type="chain" id="PRO_1000053931" description="Uridylate kinase">
    <location>
        <begin position="1"/>
        <end position="238"/>
    </location>
</feature>
<feature type="region of interest" description="Involved in allosteric activation by GTP" evidence="1">
    <location>
        <begin position="20"/>
        <end position="25"/>
    </location>
</feature>
<feature type="binding site" evidence="1">
    <location>
        <begin position="12"/>
        <end position="15"/>
    </location>
    <ligand>
        <name>ATP</name>
        <dbReference type="ChEBI" id="CHEBI:30616"/>
    </ligand>
</feature>
<feature type="binding site" evidence="1">
    <location>
        <position position="54"/>
    </location>
    <ligand>
        <name>UMP</name>
        <dbReference type="ChEBI" id="CHEBI:57865"/>
    </ligand>
</feature>
<feature type="binding site" evidence="1">
    <location>
        <position position="55"/>
    </location>
    <ligand>
        <name>ATP</name>
        <dbReference type="ChEBI" id="CHEBI:30616"/>
    </ligand>
</feature>
<feature type="binding site" evidence="1">
    <location>
        <position position="59"/>
    </location>
    <ligand>
        <name>ATP</name>
        <dbReference type="ChEBI" id="CHEBI:30616"/>
    </ligand>
</feature>
<feature type="binding site" evidence="1">
    <location>
        <position position="74"/>
    </location>
    <ligand>
        <name>UMP</name>
        <dbReference type="ChEBI" id="CHEBI:57865"/>
    </ligand>
</feature>
<feature type="binding site" evidence="1">
    <location>
        <begin position="135"/>
        <end position="142"/>
    </location>
    <ligand>
        <name>UMP</name>
        <dbReference type="ChEBI" id="CHEBI:57865"/>
    </ligand>
</feature>
<feature type="binding site" evidence="1">
    <location>
        <position position="162"/>
    </location>
    <ligand>
        <name>ATP</name>
        <dbReference type="ChEBI" id="CHEBI:30616"/>
    </ligand>
</feature>
<feature type="binding site" evidence="1">
    <location>
        <position position="168"/>
    </location>
    <ligand>
        <name>ATP</name>
        <dbReference type="ChEBI" id="CHEBI:30616"/>
    </ligand>
</feature>
<feature type="binding site" evidence="1">
    <location>
        <position position="171"/>
    </location>
    <ligand>
        <name>ATP</name>
        <dbReference type="ChEBI" id="CHEBI:30616"/>
    </ligand>
</feature>
<dbReference type="EC" id="2.7.4.22" evidence="1"/>
<dbReference type="EMBL" id="CP000436">
    <property type="protein sequence ID" value="ABI25262.1"/>
    <property type="molecule type" value="Genomic_DNA"/>
</dbReference>
<dbReference type="SMR" id="Q0I378"/>
<dbReference type="KEGG" id="hso:HS_0987"/>
<dbReference type="eggNOG" id="COG0528">
    <property type="taxonomic scope" value="Bacteria"/>
</dbReference>
<dbReference type="HOGENOM" id="CLU_033861_0_0_6"/>
<dbReference type="UniPathway" id="UPA00159">
    <property type="reaction ID" value="UER00275"/>
</dbReference>
<dbReference type="GO" id="GO:0005829">
    <property type="term" value="C:cytosol"/>
    <property type="evidence" value="ECO:0007669"/>
    <property type="project" value="TreeGrafter"/>
</dbReference>
<dbReference type="GO" id="GO:0005524">
    <property type="term" value="F:ATP binding"/>
    <property type="evidence" value="ECO:0007669"/>
    <property type="project" value="UniProtKB-KW"/>
</dbReference>
<dbReference type="GO" id="GO:0033862">
    <property type="term" value="F:UMP kinase activity"/>
    <property type="evidence" value="ECO:0007669"/>
    <property type="project" value="UniProtKB-EC"/>
</dbReference>
<dbReference type="GO" id="GO:0044210">
    <property type="term" value="P:'de novo' CTP biosynthetic process"/>
    <property type="evidence" value="ECO:0007669"/>
    <property type="project" value="UniProtKB-UniRule"/>
</dbReference>
<dbReference type="GO" id="GO:0006225">
    <property type="term" value="P:UDP biosynthetic process"/>
    <property type="evidence" value="ECO:0007669"/>
    <property type="project" value="TreeGrafter"/>
</dbReference>
<dbReference type="CDD" id="cd04254">
    <property type="entry name" value="AAK_UMPK-PyrH-Ec"/>
    <property type="match status" value="1"/>
</dbReference>
<dbReference type="FunFam" id="3.40.1160.10:FF:000001">
    <property type="entry name" value="Uridylate kinase"/>
    <property type="match status" value="1"/>
</dbReference>
<dbReference type="Gene3D" id="3.40.1160.10">
    <property type="entry name" value="Acetylglutamate kinase-like"/>
    <property type="match status" value="1"/>
</dbReference>
<dbReference type="HAMAP" id="MF_01220_B">
    <property type="entry name" value="PyrH_B"/>
    <property type="match status" value="1"/>
</dbReference>
<dbReference type="InterPro" id="IPR036393">
    <property type="entry name" value="AceGlu_kinase-like_sf"/>
</dbReference>
<dbReference type="InterPro" id="IPR001048">
    <property type="entry name" value="Asp/Glu/Uridylate_kinase"/>
</dbReference>
<dbReference type="InterPro" id="IPR011817">
    <property type="entry name" value="Uridylate_kinase"/>
</dbReference>
<dbReference type="InterPro" id="IPR015963">
    <property type="entry name" value="Uridylate_kinase_bac"/>
</dbReference>
<dbReference type="NCBIfam" id="TIGR02075">
    <property type="entry name" value="pyrH_bact"/>
    <property type="match status" value="1"/>
</dbReference>
<dbReference type="PANTHER" id="PTHR42833">
    <property type="entry name" value="URIDYLATE KINASE"/>
    <property type="match status" value="1"/>
</dbReference>
<dbReference type="PANTHER" id="PTHR42833:SF4">
    <property type="entry name" value="URIDYLATE KINASE PUMPKIN, CHLOROPLASTIC"/>
    <property type="match status" value="1"/>
</dbReference>
<dbReference type="Pfam" id="PF00696">
    <property type="entry name" value="AA_kinase"/>
    <property type="match status" value="1"/>
</dbReference>
<dbReference type="PIRSF" id="PIRSF005650">
    <property type="entry name" value="Uridylate_kin"/>
    <property type="match status" value="1"/>
</dbReference>
<dbReference type="SUPFAM" id="SSF53633">
    <property type="entry name" value="Carbamate kinase-like"/>
    <property type="match status" value="1"/>
</dbReference>
<organism>
    <name type="scientific">Histophilus somni (strain 129Pt)</name>
    <name type="common">Haemophilus somnus</name>
    <dbReference type="NCBI Taxonomy" id="205914"/>
    <lineage>
        <taxon>Bacteria</taxon>
        <taxon>Pseudomonadati</taxon>
        <taxon>Pseudomonadota</taxon>
        <taxon>Gammaproteobacteria</taxon>
        <taxon>Pasteurellales</taxon>
        <taxon>Pasteurellaceae</taxon>
        <taxon>Histophilus</taxon>
    </lineage>
</organism>
<proteinExistence type="inferred from homology"/>
<keyword id="KW-0021">Allosteric enzyme</keyword>
<keyword id="KW-0067">ATP-binding</keyword>
<keyword id="KW-0963">Cytoplasm</keyword>
<keyword id="KW-0418">Kinase</keyword>
<keyword id="KW-0547">Nucleotide-binding</keyword>
<keyword id="KW-0665">Pyrimidine biosynthesis</keyword>
<keyword id="KW-0808">Transferase</keyword>
<comment type="function">
    <text evidence="1">Catalyzes the reversible phosphorylation of UMP to UDP.</text>
</comment>
<comment type="catalytic activity">
    <reaction evidence="1">
        <text>UMP + ATP = UDP + ADP</text>
        <dbReference type="Rhea" id="RHEA:24400"/>
        <dbReference type="ChEBI" id="CHEBI:30616"/>
        <dbReference type="ChEBI" id="CHEBI:57865"/>
        <dbReference type="ChEBI" id="CHEBI:58223"/>
        <dbReference type="ChEBI" id="CHEBI:456216"/>
        <dbReference type="EC" id="2.7.4.22"/>
    </reaction>
</comment>
<comment type="activity regulation">
    <text evidence="1">Allosterically activated by GTP. Inhibited by UTP.</text>
</comment>
<comment type="pathway">
    <text evidence="1">Pyrimidine metabolism; CTP biosynthesis via de novo pathway; UDP from UMP (UMPK route): step 1/1.</text>
</comment>
<comment type="subunit">
    <text evidence="1">Homohexamer.</text>
</comment>
<comment type="subcellular location">
    <subcellularLocation>
        <location evidence="1">Cytoplasm</location>
    </subcellularLocation>
</comment>
<comment type="similarity">
    <text evidence="1">Belongs to the UMP kinase family.</text>
</comment>
<protein>
    <recommendedName>
        <fullName evidence="1">Uridylate kinase</fullName>
        <shortName evidence="1">UK</shortName>
        <ecNumber evidence="1">2.7.4.22</ecNumber>
    </recommendedName>
    <alternativeName>
        <fullName evidence="1">Uridine monophosphate kinase</fullName>
        <shortName evidence="1">UMP kinase</shortName>
        <shortName evidence="1">UMPK</shortName>
    </alternativeName>
</protein>
<name>PYRH_HISS1</name>
<evidence type="ECO:0000255" key="1">
    <source>
        <dbReference type="HAMAP-Rule" id="MF_01220"/>
    </source>
</evidence>
<gene>
    <name evidence="1" type="primary">pyrH</name>
    <name type="ordered locus">HS_0987</name>
</gene>